<protein>
    <recommendedName>
        <fullName>Capsid protein</fullName>
    </recommendedName>
    <alternativeName>
        <fullName>Coat protein</fullName>
    </alternativeName>
</protein>
<feature type="initiator methionine" description="Removed; by host" evidence="1">
    <location>
        <position position="1"/>
    </location>
</feature>
<feature type="chain" id="PRO_0000144941" description="Capsid protein">
    <location>
        <begin position="2"/>
        <end position="157"/>
    </location>
</feature>
<feature type="modified residue" description="N-acetylserine; by host" evidence="1">
    <location>
        <position position="2"/>
    </location>
</feature>
<keyword id="KW-0007">Acetylation</keyword>
<keyword id="KW-0167">Capsid protein</keyword>
<keyword id="KW-1139">Helical capsid protein</keyword>
<keyword id="KW-0946">Virion</keyword>
<proteinExistence type="evidence at transcript level"/>
<organism>
    <name type="scientific">Ribgrass mosaic virus</name>
    <name type="common">RMV</name>
    <dbReference type="NCBI Taxonomy" id="51680"/>
    <lineage>
        <taxon>Viruses</taxon>
        <taxon>Riboviria</taxon>
        <taxon>Orthornavirae</taxon>
        <taxon>Kitrinoviricota</taxon>
        <taxon>Alsuviricetes</taxon>
        <taxon>Martellivirales</taxon>
        <taxon>Virgaviridae</taxon>
        <taxon>Tobamovirus</taxon>
    </lineage>
</organism>
<gene>
    <name type="primary">CP</name>
</gene>
<sequence>MSYNITSSNQYQYFAAMWAEPTAMLNQCVSALSQSYQTQAARDTVRQQFSNLLSAIVTPNQRFPETGYRMYINSAVLKPLYESLMKSFDTRNRIIETEEESRPSASEVANATQRVDDATVAIRSQIQLLLNELSNGHGLMNRAEFEVLLPWATAPAT</sequence>
<accession>Q9QEE3</accession>
<reference key="1">
    <citation type="submission" date="1999-09" db="EMBL/GenBank/DDBJ databases">
        <title>Expression of coat protein gene of Ribgrass Mosaic Virus in Escherichia coli.</title>
        <authorList>
            <person name="Zhu H.Q."/>
            <person name="Ye R."/>
            <person name="Hong J."/>
            <person name="Chen J.P."/>
            <person name="Yu S.Q."/>
        </authorList>
    </citation>
    <scope>NUCLEOTIDE SEQUENCE [MRNA]</scope>
</reference>
<name>CAPSD_RMV</name>
<evidence type="ECO:0000250" key="1"/>
<evidence type="ECO:0000305" key="2"/>
<comment type="function">
    <text>Capsid protein self-assembles to form rod-shaped virions about 18 nm in diameter with a central canal enclosing the viral genomic RNA.</text>
</comment>
<comment type="subcellular location">
    <subcellularLocation>
        <location evidence="2">Virion</location>
    </subcellularLocation>
</comment>
<comment type="similarity">
    <text evidence="2">Belongs to the virgaviridae capsid protein family.</text>
</comment>
<dbReference type="EMBL" id="AF185272">
    <property type="protein sequence ID" value="AAD56047.1"/>
    <property type="molecule type" value="mRNA"/>
</dbReference>
<dbReference type="SMR" id="Q9QEE3"/>
<dbReference type="GO" id="GO:0019029">
    <property type="term" value="C:helical viral capsid"/>
    <property type="evidence" value="ECO:0007669"/>
    <property type="project" value="UniProtKB-KW"/>
</dbReference>
<dbReference type="GO" id="GO:0005198">
    <property type="term" value="F:structural molecule activity"/>
    <property type="evidence" value="ECO:0007669"/>
    <property type="project" value="InterPro"/>
</dbReference>
<dbReference type="Gene3D" id="1.20.120.70">
    <property type="entry name" value="Tobacco mosaic virus-like, coat protein"/>
    <property type="match status" value="1"/>
</dbReference>
<dbReference type="InterPro" id="IPR001337">
    <property type="entry name" value="TMV-like_coat"/>
</dbReference>
<dbReference type="InterPro" id="IPR036417">
    <property type="entry name" value="TMV-like_coat_sf"/>
</dbReference>
<dbReference type="Pfam" id="PF00721">
    <property type="entry name" value="TMV_coat"/>
    <property type="match status" value="1"/>
</dbReference>
<dbReference type="SUPFAM" id="SSF47195">
    <property type="entry name" value="TMV-like viral coat proteins"/>
    <property type="match status" value="1"/>
</dbReference>
<organismHost>
    <name type="scientific">Digitalis lanata</name>
    <name type="common">Grecian foxglove</name>
    <dbReference type="NCBI Taxonomy" id="49450"/>
</organismHost>
<organismHost>
    <name type="scientific">Eutrema japonicum</name>
    <name type="common">Wasabi plant</name>
    <name type="synonym">Eutrema wasabi</name>
    <dbReference type="NCBI Taxonomy" id="75806"/>
</organismHost>
<organismHost>
    <name type="scientific">Nicotiana tabacum</name>
    <name type="common">Common tobacco</name>
    <dbReference type="NCBI Taxonomy" id="4097"/>
</organismHost>
<organismHost>
    <name type="scientific">Plantago lanceolata</name>
    <name type="common">English plantain</name>
    <name type="synonym">Ribwort plantain</name>
    <dbReference type="NCBI Taxonomy" id="39414"/>
</organismHost>
<organismHost>
    <name type="scientific">Plantago major</name>
    <name type="common">Common plantain</name>
    <dbReference type="NCBI Taxonomy" id="29818"/>
</organismHost>
<organismHost>
    <name type="scientific">Rorippa amphibia</name>
    <name type="common">Great yellow-cress</name>
    <name type="synonym">Nasturtium amphibium</name>
    <dbReference type="NCBI Taxonomy" id="65951"/>
</organismHost>
<organismHost>
    <name type="scientific">Rorippa sylvestris</name>
    <name type="common">Creeping yellow-cress</name>
    <name type="synonym">Nasturtium sylvestre</name>
    <dbReference type="NCBI Taxonomy" id="65952"/>
</organismHost>
<organismHost>
    <name type="scientific">Silene latifolia subsp. alba</name>
    <name type="common">White campion</name>
    <name type="synonym">Lychnis alba</name>
    <dbReference type="NCBI Taxonomy" id="52853"/>
</organismHost>
<organismHost>
    <name type="scientific">Sisymbrium loeselii</name>
    <dbReference type="NCBI Taxonomy" id="203579"/>
</organismHost>